<sequence>MGIIIGLIIVSVALIISLCSLLYILTSKSQKVLNEKKIKEAKNERKKILSDTYREINEQKKSFEENLQFEKNKLEIAKQNIENENNLLIKERAIIIKQQEAIDVKNTDLDKRIKNYSDKREELIKRLEIISNMTSFEAKAELMKNVESKIQYEIVSQIKQAENLAHARAKELSNNIILSAMERFKTDIVNEKTTNLVKLPNDDIKGWIIGKDGRNLKTFEQLAGVEIIVDDTPEVVTISSFNPIRREIATKTLEKLLIDKRIQPIKIEKELKVQEKLIDETILEIGYQVMDELGIHDMDKELVKLVGKLKYRTSYGQNVLLHSVEVAKIASSIASELGLNAKQALRAGLLHDIGKAIDFEKTGSHVFLGVEVARKYGEDEVIINSIEAHHEDVAKESEIAVIVAIADAISASKPGARNNSIEDFIVRMKEIEKIGNSIPGISKTYAFQAGRQIRVIVDPVTTDDKDLAGILETLKNDLKNSVIIPGEITITAIREKREILVFN</sequence>
<keyword id="KW-1003">Cell membrane</keyword>
<keyword id="KW-0255">Endonuclease</keyword>
<keyword id="KW-0378">Hydrolase</keyword>
<keyword id="KW-0472">Membrane</keyword>
<keyword id="KW-0540">Nuclease</keyword>
<keyword id="KW-1185">Reference proteome</keyword>
<keyword id="KW-0694">RNA-binding</keyword>
<keyword id="KW-0812">Transmembrane</keyword>
<keyword id="KW-1133">Transmembrane helix</keyword>
<dbReference type="EC" id="3.1.-.-" evidence="1"/>
<dbReference type="EMBL" id="AE017263">
    <property type="protein sequence ID" value="AAT75564.1"/>
    <property type="molecule type" value="Genomic_DNA"/>
</dbReference>
<dbReference type="RefSeq" id="WP_011183104.1">
    <property type="nucleotide sequence ID" value="NC_006055.1"/>
</dbReference>
<dbReference type="RefSeq" id="YP_053448.1">
    <property type="nucleotide sequence ID" value="NC_006055.1"/>
</dbReference>
<dbReference type="SMR" id="Q6F1Q9"/>
<dbReference type="STRING" id="265311.Mfl207"/>
<dbReference type="PaxDb" id="265311-Mfl207"/>
<dbReference type="EnsemblBacteria" id="AAT75564">
    <property type="protein sequence ID" value="AAT75564"/>
    <property type="gene ID" value="Mfl207"/>
</dbReference>
<dbReference type="GeneID" id="2898287"/>
<dbReference type="KEGG" id="mfl:Mfl207"/>
<dbReference type="PATRIC" id="fig|265311.5.peg.208"/>
<dbReference type="eggNOG" id="COG1418">
    <property type="taxonomic scope" value="Bacteria"/>
</dbReference>
<dbReference type="HOGENOM" id="CLU_028328_1_0_14"/>
<dbReference type="OrthoDB" id="9803205at2"/>
<dbReference type="Proteomes" id="UP000006647">
    <property type="component" value="Chromosome"/>
</dbReference>
<dbReference type="GO" id="GO:0005886">
    <property type="term" value="C:plasma membrane"/>
    <property type="evidence" value="ECO:0007669"/>
    <property type="project" value="UniProtKB-SubCell"/>
</dbReference>
<dbReference type="GO" id="GO:0003723">
    <property type="term" value="F:RNA binding"/>
    <property type="evidence" value="ECO:0007669"/>
    <property type="project" value="UniProtKB-UniRule"/>
</dbReference>
<dbReference type="GO" id="GO:0004521">
    <property type="term" value="F:RNA endonuclease activity"/>
    <property type="evidence" value="ECO:0007669"/>
    <property type="project" value="UniProtKB-UniRule"/>
</dbReference>
<dbReference type="GO" id="GO:0006402">
    <property type="term" value="P:mRNA catabolic process"/>
    <property type="evidence" value="ECO:0007669"/>
    <property type="project" value="UniProtKB-UniRule"/>
</dbReference>
<dbReference type="CDD" id="cd00077">
    <property type="entry name" value="HDc"/>
    <property type="match status" value="1"/>
</dbReference>
<dbReference type="CDD" id="cd22431">
    <property type="entry name" value="KH-I_RNaseY"/>
    <property type="match status" value="1"/>
</dbReference>
<dbReference type="Gene3D" id="1.10.3210.10">
    <property type="entry name" value="Hypothetical protein af1432"/>
    <property type="match status" value="1"/>
</dbReference>
<dbReference type="HAMAP" id="MF_00335">
    <property type="entry name" value="RNase_Y"/>
    <property type="match status" value="1"/>
</dbReference>
<dbReference type="InterPro" id="IPR003607">
    <property type="entry name" value="HD/PDEase_dom"/>
</dbReference>
<dbReference type="InterPro" id="IPR006674">
    <property type="entry name" value="HD_domain"/>
</dbReference>
<dbReference type="InterPro" id="IPR006675">
    <property type="entry name" value="HDIG_dom"/>
</dbReference>
<dbReference type="InterPro" id="IPR004087">
    <property type="entry name" value="KH_dom"/>
</dbReference>
<dbReference type="InterPro" id="IPR004088">
    <property type="entry name" value="KH_dom_type_1"/>
</dbReference>
<dbReference type="InterPro" id="IPR036612">
    <property type="entry name" value="KH_dom_type_1_sf"/>
</dbReference>
<dbReference type="InterPro" id="IPR017705">
    <property type="entry name" value="Ribonuclease_Y"/>
</dbReference>
<dbReference type="InterPro" id="IPR022711">
    <property type="entry name" value="RNase_Y_N"/>
</dbReference>
<dbReference type="NCBIfam" id="TIGR00277">
    <property type="entry name" value="HDIG"/>
    <property type="match status" value="1"/>
</dbReference>
<dbReference type="NCBIfam" id="TIGR03319">
    <property type="entry name" value="RNase_Y"/>
    <property type="match status" value="1"/>
</dbReference>
<dbReference type="PANTHER" id="PTHR12826">
    <property type="entry name" value="RIBONUCLEASE Y"/>
    <property type="match status" value="1"/>
</dbReference>
<dbReference type="PANTHER" id="PTHR12826:SF15">
    <property type="entry name" value="RIBONUCLEASE Y"/>
    <property type="match status" value="1"/>
</dbReference>
<dbReference type="Pfam" id="PF01966">
    <property type="entry name" value="HD"/>
    <property type="match status" value="1"/>
</dbReference>
<dbReference type="Pfam" id="PF00013">
    <property type="entry name" value="KH_1"/>
    <property type="match status" value="1"/>
</dbReference>
<dbReference type="Pfam" id="PF12072">
    <property type="entry name" value="RNase_Y_N"/>
    <property type="match status" value="1"/>
</dbReference>
<dbReference type="SMART" id="SM00471">
    <property type="entry name" value="HDc"/>
    <property type="match status" value="1"/>
</dbReference>
<dbReference type="SMART" id="SM00322">
    <property type="entry name" value="KH"/>
    <property type="match status" value="1"/>
</dbReference>
<dbReference type="SUPFAM" id="SSF54791">
    <property type="entry name" value="Eukaryotic type KH-domain (KH-domain type I)"/>
    <property type="match status" value="1"/>
</dbReference>
<dbReference type="SUPFAM" id="SSF109604">
    <property type="entry name" value="HD-domain/PDEase-like"/>
    <property type="match status" value="1"/>
</dbReference>
<dbReference type="PROSITE" id="PS51831">
    <property type="entry name" value="HD"/>
    <property type="match status" value="1"/>
</dbReference>
<dbReference type="PROSITE" id="PS50084">
    <property type="entry name" value="KH_TYPE_1"/>
    <property type="match status" value="1"/>
</dbReference>
<reference key="1">
    <citation type="submission" date="2004-06" db="EMBL/GenBank/DDBJ databases">
        <authorList>
            <person name="Birren B.W."/>
            <person name="Stange-Thomann N."/>
            <person name="Hafez N."/>
            <person name="DeCaprio D."/>
            <person name="Fisher S."/>
            <person name="Butler J."/>
            <person name="Elkins T."/>
            <person name="Kodira C.D."/>
            <person name="Major J."/>
            <person name="Wang S."/>
            <person name="Nicol R."/>
            <person name="Nusbaum C."/>
        </authorList>
    </citation>
    <scope>NUCLEOTIDE SEQUENCE [LARGE SCALE GENOMIC DNA]</scope>
    <source>
        <strain>ATCC 33453 / NBRC 100688 / NCTC 11704 / L1</strain>
    </source>
</reference>
<organism>
    <name type="scientific">Mesoplasma florum (strain ATCC 33453 / NBRC 100688 / NCTC 11704 / L1)</name>
    <name type="common">Acholeplasma florum</name>
    <dbReference type="NCBI Taxonomy" id="265311"/>
    <lineage>
        <taxon>Bacteria</taxon>
        <taxon>Bacillati</taxon>
        <taxon>Mycoplasmatota</taxon>
        <taxon>Mollicutes</taxon>
        <taxon>Entomoplasmatales</taxon>
        <taxon>Entomoplasmataceae</taxon>
        <taxon>Mesoplasma</taxon>
    </lineage>
</organism>
<name>RNY_MESFL</name>
<protein>
    <recommendedName>
        <fullName evidence="1">Ribonuclease Y</fullName>
        <shortName evidence="1">RNase Y</shortName>
        <ecNumber evidence="1">3.1.-.-</ecNumber>
    </recommendedName>
</protein>
<feature type="chain" id="PRO_0000344906" description="Ribonuclease Y">
    <location>
        <begin position="1"/>
        <end position="503"/>
    </location>
</feature>
<feature type="transmembrane region" description="Helical" evidence="1">
    <location>
        <begin position="2"/>
        <end position="22"/>
    </location>
</feature>
<feature type="domain" description="KH" evidence="1">
    <location>
        <begin position="193"/>
        <end position="253"/>
    </location>
</feature>
<feature type="domain" description="HD" evidence="2">
    <location>
        <begin position="319"/>
        <end position="412"/>
    </location>
</feature>
<comment type="function">
    <text evidence="1">Endoribonuclease that initiates mRNA decay.</text>
</comment>
<comment type="subcellular location">
    <subcellularLocation>
        <location evidence="1">Cell membrane</location>
        <topology evidence="1">Single-pass membrane protein</topology>
    </subcellularLocation>
</comment>
<comment type="similarity">
    <text evidence="1">Belongs to the RNase Y family.</text>
</comment>
<accession>Q6F1Q9</accession>
<evidence type="ECO:0000255" key="1">
    <source>
        <dbReference type="HAMAP-Rule" id="MF_00335"/>
    </source>
</evidence>
<evidence type="ECO:0000255" key="2">
    <source>
        <dbReference type="PROSITE-ProRule" id="PRU01175"/>
    </source>
</evidence>
<proteinExistence type="inferred from homology"/>
<gene>
    <name evidence="1" type="primary">rny</name>
    <name type="ordered locus">Mfl207</name>
</gene>